<proteinExistence type="inferred from homology"/>
<feature type="chain" id="PRO_1000017130" description="tRNA pseudouridine synthase A">
    <location>
        <begin position="1"/>
        <end position="261"/>
    </location>
</feature>
<feature type="active site" description="Nucleophile" evidence="1">
    <location>
        <position position="55"/>
    </location>
</feature>
<feature type="binding site" evidence="1">
    <location>
        <position position="114"/>
    </location>
    <ligand>
        <name>substrate</name>
    </ligand>
</feature>
<sequence>MPRFALLIEYDGSPFAGWQAQAERPSVQSTIEAALGRLDPGFAAGARIAAAGRTDAGVHATGQVAHADLARDWDPFRLSEALNWHLKPAPVAILAAARVADDFHARFSAHERRYLFRLVARRAPLTHDRGRAWQVPHRLDLAAMRAGAAHLLGRHDFTTFRSTMCQANSPVKTLDELTIDEAEIPQGREYRFFLRARSFLHNQVRSIVGTLERVGAGAWPPGRVAEALAACDRAACGPVCPPQGLYLTGVGYETPPFSDSR</sequence>
<reference key="1">
    <citation type="submission" date="2006-12" db="EMBL/GenBank/DDBJ databases">
        <title>Complete sequence of chromosome 1 of Paracoccus denitrificans PD1222.</title>
        <authorList>
            <person name="Copeland A."/>
            <person name="Lucas S."/>
            <person name="Lapidus A."/>
            <person name="Barry K."/>
            <person name="Detter J.C."/>
            <person name="Glavina del Rio T."/>
            <person name="Hammon N."/>
            <person name="Israni S."/>
            <person name="Dalin E."/>
            <person name="Tice H."/>
            <person name="Pitluck S."/>
            <person name="Munk A.C."/>
            <person name="Brettin T."/>
            <person name="Bruce D."/>
            <person name="Han C."/>
            <person name="Tapia R."/>
            <person name="Gilna P."/>
            <person name="Schmutz J."/>
            <person name="Larimer F."/>
            <person name="Land M."/>
            <person name="Hauser L."/>
            <person name="Kyrpides N."/>
            <person name="Lykidis A."/>
            <person name="Spiro S."/>
            <person name="Richardson D.J."/>
            <person name="Moir J.W.B."/>
            <person name="Ferguson S.J."/>
            <person name="van Spanning R.J.M."/>
            <person name="Richardson P."/>
        </authorList>
    </citation>
    <scope>NUCLEOTIDE SEQUENCE [LARGE SCALE GENOMIC DNA]</scope>
    <source>
        <strain>Pd 1222</strain>
    </source>
</reference>
<gene>
    <name evidence="1" type="primary">truA</name>
    <name type="ordered locus">Pden_0534</name>
</gene>
<name>TRUA_PARDP</name>
<evidence type="ECO:0000255" key="1">
    <source>
        <dbReference type="HAMAP-Rule" id="MF_00171"/>
    </source>
</evidence>
<protein>
    <recommendedName>
        <fullName evidence="1">tRNA pseudouridine synthase A</fullName>
        <ecNumber evidence="1">5.4.99.12</ecNumber>
    </recommendedName>
    <alternativeName>
        <fullName evidence="1">tRNA pseudouridine(38-40) synthase</fullName>
    </alternativeName>
    <alternativeName>
        <fullName evidence="1">tRNA pseudouridylate synthase I</fullName>
    </alternativeName>
    <alternativeName>
        <fullName evidence="1">tRNA-uridine isomerase I</fullName>
    </alternativeName>
</protein>
<dbReference type="EC" id="5.4.99.12" evidence="1"/>
<dbReference type="EMBL" id="CP000489">
    <property type="protein sequence ID" value="ABL68646.1"/>
    <property type="molecule type" value="Genomic_DNA"/>
</dbReference>
<dbReference type="RefSeq" id="WP_011746879.1">
    <property type="nucleotide sequence ID" value="NC_008686.1"/>
</dbReference>
<dbReference type="SMR" id="A1AZF2"/>
<dbReference type="STRING" id="318586.Pden_0534"/>
<dbReference type="EnsemblBacteria" id="ABL68646">
    <property type="protein sequence ID" value="ABL68646"/>
    <property type="gene ID" value="Pden_0534"/>
</dbReference>
<dbReference type="GeneID" id="93451759"/>
<dbReference type="KEGG" id="pde:Pden_0534"/>
<dbReference type="eggNOG" id="COG0101">
    <property type="taxonomic scope" value="Bacteria"/>
</dbReference>
<dbReference type="HOGENOM" id="CLU_014673_0_2_5"/>
<dbReference type="OrthoDB" id="9811823at2"/>
<dbReference type="Proteomes" id="UP000000361">
    <property type="component" value="Chromosome 1"/>
</dbReference>
<dbReference type="GO" id="GO:0003723">
    <property type="term" value="F:RNA binding"/>
    <property type="evidence" value="ECO:0007669"/>
    <property type="project" value="InterPro"/>
</dbReference>
<dbReference type="GO" id="GO:0160147">
    <property type="term" value="F:tRNA pseudouridine(38-40) synthase activity"/>
    <property type="evidence" value="ECO:0007669"/>
    <property type="project" value="UniProtKB-EC"/>
</dbReference>
<dbReference type="GO" id="GO:0031119">
    <property type="term" value="P:tRNA pseudouridine synthesis"/>
    <property type="evidence" value="ECO:0007669"/>
    <property type="project" value="UniProtKB-UniRule"/>
</dbReference>
<dbReference type="CDD" id="cd02570">
    <property type="entry name" value="PseudoU_synth_EcTruA"/>
    <property type="match status" value="1"/>
</dbReference>
<dbReference type="FunFam" id="3.30.70.580:FF:000001">
    <property type="entry name" value="tRNA pseudouridine synthase A"/>
    <property type="match status" value="1"/>
</dbReference>
<dbReference type="Gene3D" id="3.30.70.660">
    <property type="entry name" value="Pseudouridine synthase I, catalytic domain, C-terminal subdomain"/>
    <property type="match status" value="1"/>
</dbReference>
<dbReference type="Gene3D" id="3.30.70.580">
    <property type="entry name" value="Pseudouridine synthase I, catalytic domain, N-terminal subdomain"/>
    <property type="match status" value="1"/>
</dbReference>
<dbReference type="HAMAP" id="MF_00171">
    <property type="entry name" value="TruA"/>
    <property type="match status" value="1"/>
</dbReference>
<dbReference type="InterPro" id="IPR020103">
    <property type="entry name" value="PsdUridine_synth_cat_dom_sf"/>
</dbReference>
<dbReference type="InterPro" id="IPR001406">
    <property type="entry name" value="PsdUridine_synth_TruA"/>
</dbReference>
<dbReference type="InterPro" id="IPR020097">
    <property type="entry name" value="PsdUridine_synth_TruA_a/b_dom"/>
</dbReference>
<dbReference type="InterPro" id="IPR020095">
    <property type="entry name" value="PsdUridine_synth_TruA_C"/>
</dbReference>
<dbReference type="InterPro" id="IPR020094">
    <property type="entry name" value="TruA/RsuA/RluB/E/F_N"/>
</dbReference>
<dbReference type="NCBIfam" id="TIGR00071">
    <property type="entry name" value="hisT_truA"/>
    <property type="match status" value="1"/>
</dbReference>
<dbReference type="PANTHER" id="PTHR11142">
    <property type="entry name" value="PSEUDOURIDYLATE SYNTHASE"/>
    <property type="match status" value="1"/>
</dbReference>
<dbReference type="PANTHER" id="PTHR11142:SF0">
    <property type="entry name" value="TRNA PSEUDOURIDINE SYNTHASE-LIKE 1"/>
    <property type="match status" value="1"/>
</dbReference>
<dbReference type="Pfam" id="PF01416">
    <property type="entry name" value="PseudoU_synth_1"/>
    <property type="match status" value="2"/>
</dbReference>
<dbReference type="PIRSF" id="PIRSF001430">
    <property type="entry name" value="tRNA_psdUrid_synth"/>
    <property type="match status" value="1"/>
</dbReference>
<dbReference type="SUPFAM" id="SSF55120">
    <property type="entry name" value="Pseudouridine synthase"/>
    <property type="match status" value="1"/>
</dbReference>
<keyword id="KW-0413">Isomerase</keyword>
<keyword id="KW-1185">Reference proteome</keyword>
<keyword id="KW-0819">tRNA processing</keyword>
<comment type="function">
    <text evidence="1">Formation of pseudouridine at positions 38, 39 and 40 in the anticodon stem and loop of transfer RNAs.</text>
</comment>
<comment type="catalytic activity">
    <reaction evidence="1">
        <text>uridine(38/39/40) in tRNA = pseudouridine(38/39/40) in tRNA</text>
        <dbReference type="Rhea" id="RHEA:22376"/>
        <dbReference type="Rhea" id="RHEA-COMP:10085"/>
        <dbReference type="Rhea" id="RHEA-COMP:10087"/>
        <dbReference type="ChEBI" id="CHEBI:65314"/>
        <dbReference type="ChEBI" id="CHEBI:65315"/>
        <dbReference type="EC" id="5.4.99.12"/>
    </reaction>
</comment>
<comment type="subunit">
    <text evidence="1">Homodimer.</text>
</comment>
<comment type="similarity">
    <text evidence="1">Belongs to the tRNA pseudouridine synthase TruA family.</text>
</comment>
<organism>
    <name type="scientific">Paracoccus denitrificans (strain Pd 1222)</name>
    <dbReference type="NCBI Taxonomy" id="318586"/>
    <lineage>
        <taxon>Bacteria</taxon>
        <taxon>Pseudomonadati</taxon>
        <taxon>Pseudomonadota</taxon>
        <taxon>Alphaproteobacteria</taxon>
        <taxon>Rhodobacterales</taxon>
        <taxon>Paracoccaceae</taxon>
        <taxon>Paracoccus</taxon>
    </lineage>
</organism>
<accession>A1AZF2</accession>